<dbReference type="EC" id="7.3.2.1" evidence="1"/>
<dbReference type="EMBL" id="CP000248">
    <property type="protein sequence ID" value="ABD26716.1"/>
    <property type="molecule type" value="Genomic_DNA"/>
</dbReference>
<dbReference type="SMR" id="Q2G607"/>
<dbReference type="STRING" id="279238.Saro_2279"/>
<dbReference type="KEGG" id="nar:Saro_2279"/>
<dbReference type="eggNOG" id="COG1117">
    <property type="taxonomic scope" value="Bacteria"/>
</dbReference>
<dbReference type="HOGENOM" id="CLU_000604_1_22_5"/>
<dbReference type="Proteomes" id="UP000009134">
    <property type="component" value="Chromosome"/>
</dbReference>
<dbReference type="GO" id="GO:0005886">
    <property type="term" value="C:plasma membrane"/>
    <property type="evidence" value="ECO:0007669"/>
    <property type="project" value="UniProtKB-SubCell"/>
</dbReference>
<dbReference type="GO" id="GO:0005524">
    <property type="term" value="F:ATP binding"/>
    <property type="evidence" value="ECO:0007669"/>
    <property type="project" value="UniProtKB-KW"/>
</dbReference>
<dbReference type="GO" id="GO:0016887">
    <property type="term" value="F:ATP hydrolysis activity"/>
    <property type="evidence" value="ECO:0007669"/>
    <property type="project" value="InterPro"/>
</dbReference>
<dbReference type="GO" id="GO:0015415">
    <property type="term" value="F:ATPase-coupled phosphate ion transmembrane transporter activity"/>
    <property type="evidence" value="ECO:0007669"/>
    <property type="project" value="UniProtKB-EC"/>
</dbReference>
<dbReference type="GO" id="GO:0035435">
    <property type="term" value="P:phosphate ion transmembrane transport"/>
    <property type="evidence" value="ECO:0007669"/>
    <property type="project" value="InterPro"/>
</dbReference>
<dbReference type="CDD" id="cd03260">
    <property type="entry name" value="ABC_PstB_phosphate_transporter"/>
    <property type="match status" value="1"/>
</dbReference>
<dbReference type="FunFam" id="3.40.50.300:FF:000132">
    <property type="entry name" value="Phosphate import ATP-binding protein PstB"/>
    <property type="match status" value="1"/>
</dbReference>
<dbReference type="Gene3D" id="3.40.50.300">
    <property type="entry name" value="P-loop containing nucleotide triphosphate hydrolases"/>
    <property type="match status" value="1"/>
</dbReference>
<dbReference type="InterPro" id="IPR003593">
    <property type="entry name" value="AAA+_ATPase"/>
</dbReference>
<dbReference type="InterPro" id="IPR003439">
    <property type="entry name" value="ABC_transporter-like_ATP-bd"/>
</dbReference>
<dbReference type="InterPro" id="IPR017871">
    <property type="entry name" value="ABC_transporter-like_CS"/>
</dbReference>
<dbReference type="InterPro" id="IPR027417">
    <property type="entry name" value="P-loop_NTPase"/>
</dbReference>
<dbReference type="InterPro" id="IPR005670">
    <property type="entry name" value="PstB-like"/>
</dbReference>
<dbReference type="NCBIfam" id="TIGR00972">
    <property type="entry name" value="3a0107s01c2"/>
    <property type="match status" value="1"/>
</dbReference>
<dbReference type="PANTHER" id="PTHR43423">
    <property type="entry name" value="ABC TRANSPORTER I FAMILY MEMBER 17"/>
    <property type="match status" value="1"/>
</dbReference>
<dbReference type="PANTHER" id="PTHR43423:SF1">
    <property type="entry name" value="ABC TRANSPORTER I FAMILY MEMBER 17"/>
    <property type="match status" value="1"/>
</dbReference>
<dbReference type="Pfam" id="PF00005">
    <property type="entry name" value="ABC_tran"/>
    <property type="match status" value="1"/>
</dbReference>
<dbReference type="SMART" id="SM00382">
    <property type="entry name" value="AAA"/>
    <property type="match status" value="1"/>
</dbReference>
<dbReference type="SUPFAM" id="SSF52540">
    <property type="entry name" value="P-loop containing nucleoside triphosphate hydrolases"/>
    <property type="match status" value="1"/>
</dbReference>
<dbReference type="PROSITE" id="PS00211">
    <property type="entry name" value="ABC_TRANSPORTER_1"/>
    <property type="match status" value="1"/>
</dbReference>
<dbReference type="PROSITE" id="PS50893">
    <property type="entry name" value="ABC_TRANSPORTER_2"/>
    <property type="match status" value="1"/>
</dbReference>
<dbReference type="PROSITE" id="PS51238">
    <property type="entry name" value="PSTB"/>
    <property type="match status" value="1"/>
</dbReference>
<reference key="1">
    <citation type="submission" date="2006-01" db="EMBL/GenBank/DDBJ databases">
        <title>Complete sequence of Novosphingobium aromaticivorans DSM 12444.</title>
        <authorList>
            <consortium name="US DOE Joint Genome Institute"/>
            <person name="Copeland A."/>
            <person name="Lucas S."/>
            <person name="Lapidus A."/>
            <person name="Barry K."/>
            <person name="Detter J.C."/>
            <person name="Glavina T."/>
            <person name="Hammon N."/>
            <person name="Israni S."/>
            <person name="Pitluck S."/>
            <person name="Chain P."/>
            <person name="Malfatti S."/>
            <person name="Shin M."/>
            <person name="Vergez L."/>
            <person name="Schmutz J."/>
            <person name="Larimer F."/>
            <person name="Land M."/>
            <person name="Kyrpides N."/>
            <person name="Ivanova N."/>
            <person name="Fredrickson J."/>
            <person name="Balkwill D."/>
            <person name="Romine M.F."/>
            <person name="Richardson P."/>
        </authorList>
    </citation>
    <scope>NUCLEOTIDE SEQUENCE [LARGE SCALE GENOMIC DNA]</scope>
    <source>
        <strain>ATCC 700278 / DSM 12444 / CCUG 56034 / CIP 105152 / NBRC 16084 / F199</strain>
    </source>
</reference>
<evidence type="ECO:0000255" key="1">
    <source>
        <dbReference type="HAMAP-Rule" id="MF_01702"/>
    </source>
</evidence>
<accession>Q2G607</accession>
<name>PSTB_NOVAD</name>
<feature type="chain" id="PRO_0000272487" description="Phosphate import ATP-binding protein PstB">
    <location>
        <begin position="1"/>
        <end position="275"/>
    </location>
</feature>
<feature type="domain" description="ABC transporter" evidence="1">
    <location>
        <begin position="28"/>
        <end position="270"/>
    </location>
</feature>
<feature type="binding site" evidence="1">
    <location>
        <begin position="60"/>
        <end position="67"/>
    </location>
    <ligand>
        <name>ATP</name>
        <dbReference type="ChEBI" id="CHEBI:30616"/>
    </ligand>
</feature>
<keyword id="KW-0067">ATP-binding</keyword>
<keyword id="KW-0997">Cell inner membrane</keyword>
<keyword id="KW-1003">Cell membrane</keyword>
<keyword id="KW-0472">Membrane</keyword>
<keyword id="KW-0547">Nucleotide-binding</keyword>
<keyword id="KW-0592">Phosphate transport</keyword>
<keyword id="KW-1185">Reference proteome</keyword>
<keyword id="KW-1278">Translocase</keyword>
<keyword id="KW-0813">Transport</keyword>
<organism>
    <name type="scientific">Novosphingobium aromaticivorans (strain ATCC 700278 / DSM 12444 / CCUG 56034 / CIP 105152 / NBRC 16084 / F199)</name>
    <dbReference type="NCBI Taxonomy" id="279238"/>
    <lineage>
        <taxon>Bacteria</taxon>
        <taxon>Pseudomonadati</taxon>
        <taxon>Pseudomonadota</taxon>
        <taxon>Alphaproteobacteria</taxon>
        <taxon>Sphingomonadales</taxon>
        <taxon>Sphingomonadaceae</taxon>
        <taxon>Novosphingobium</taxon>
    </lineage>
</organism>
<gene>
    <name evidence="1" type="primary">pstB</name>
    <name type="ordered locus">Saro_2279</name>
</gene>
<proteinExistence type="inferred from homology"/>
<protein>
    <recommendedName>
        <fullName evidence="1">Phosphate import ATP-binding protein PstB</fullName>
        <ecNumber evidence="1">7.3.2.1</ecNumber>
    </recommendedName>
    <alternativeName>
        <fullName evidence="1">ABC phosphate transporter</fullName>
    </alternativeName>
    <alternativeName>
        <fullName evidence="1">Phosphate-transporting ATPase</fullName>
    </alternativeName>
</protein>
<comment type="function">
    <text evidence="1">Part of the ABC transporter complex PstSACB involved in phosphate import. Responsible for energy coupling to the transport system.</text>
</comment>
<comment type="catalytic activity">
    <reaction evidence="1">
        <text>phosphate(out) + ATP + H2O = ADP + 2 phosphate(in) + H(+)</text>
        <dbReference type="Rhea" id="RHEA:24440"/>
        <dbReference type="ChEBI" id="CHEBI:15377"/>
        <dbReference type="ChEBI" id="CHEBI:15378"/>
        <dbReference type="ChEBI" id="CHEBI:30616"/>
        <dbReference type="ChEBI" id="CHEBI:43474"/>
        <dbReference type="ChEBI" id="CHEBI:456216"/>
        <dbReference type="EC" id="7.3.2.1"/>
    </reaction>
</comment>
<comment type="subunit">
    <text evidence="1">The complex is composed of two ATP-binding proteins (PstB), two transmembrane proteins (PstC and PstA) and a solute-binding protein (PstS).</text>
</comment>
<comment type="subcellular location">
    <subcellularLocation>
        <location evidence="1">Cell inner membrane</location>
        <topology evidence="1">Peripheral membrane protein</topology>
    </subcellularLocation>
</comment>
<comment type="similarity">
    <text evidence="1">Belongs to the ABC transporter superfamily. Phosphate importer (TC 3.A.1.7) family.</text>
</comment>
<sequence length="275" mass="30513">MNAEAIQTPMTVDVKADDKPYFDAPSKMSAKNVSVFYGDKRAIDDVSIEIPQRYVTAFIGPSGCGKSTFLRSLNRMNDTIANARVEGEILLDGEDIYKSGMDVVQLRARVGMVFQKPNPFPKSIYENIAYGPKIHGITGSKAELDEIVEQSLRRAGLWDEVKDRLGDSGTALSGGQQQRLCIARAIAVDPEVILMDEPCSALDPIATARIEELIDELRGRYAIVIVTHSMQQAARVSQRTAFFHLGKIVEYGKTSDIFTNPREERTKDYITGRYG</sequence>